<reference key="1">
    <citation type="submission" date="2009-04" db="EMBL/GenBank/DDBJ databases">
        <title>Genome sequence of Bacillus anthracis A0248.</title>
        <authorList>
            <person name="Dodson R.J."/>
            <person name="Munk A.C."/>
            <person name="Bruce D."/>
            <person name="Detter C."/>
            <person name="Tapia R."/>
            <person name="Sutton G."/>
            <person name="Sims D."/>
            <person name="Brettin T."/>
        </authorList>
    </citation>
    <scope>NUCLEOTIDE SEQUENCE [LARGE SCALE GENOMIC DNA]</scope>
    <source>
        <strain>A0248</strain>
    </source>
</reference>
<proteinExistence type="inferred from homology"/>
<evidence type="ECO:0000255" key="1">
    <source>
        <dbReference type="HAMAP-Rule" id="MF_01669"/>
    </source>
</evidence>
<keyword id="KW-0378">Hydrolase</keyword>
<keyword id="KW-0460">Magnesium</keyword>
<keyword id="KW-0479">Metal-binding</keyword>
<keyword id="KW-0520">NAD</keyword>
<keyword id="KW-0786">Thiamine pyrophosphate</keyword>
<accession>C3PAZ3</accession>
<feature type="chain" id="PRO_1000187307" description="3D-(3,5/4)-trihydroxycyclohexane-1,2-dione hydrolase">
    <location>
        <begin position="1"/>
        <end position="644"/>
    </location>
</feature>
<feature type="region of interest" description="Thiamine pyrophosphate binding" evidence="1">
    <location>
        <begin position="442"/>
        <end position="522"/>
    </location>
</feature>
<feature type="binding site" evidence="1">
    <location>
        <position position="65"/>
    </location>
    <ligand>
        <name>thiamine diphosphate</name>
        <dbReference type="ChEBI" id="CHEBI:58937"/>
    </ligand>
</feature>
<feature type="binding site" evidence="1">
    <location>
        <position position="493"/>
    </location>
    <ligand>
        <name>Mg(2+)</name>
        <dbReference type="ChEBI" id="CHEBI:18420"/>
    </ligand>
</feature>
<feature type="binding site" evidence="1">
    <location>
        <position position="520"/>
    </location>
    <ligand>
        <name>Mg(2+)</name>
        <dbReference type="ChEBI" id="CHEBI:18420"/>
    </ligand>
</feature>
<protein>
    <recommendedName>
        <fullName evidence="1">3D-(3,5/4)-trihydroxycyclohexane-1,2-dione hydrolase</fullName>
        <shortName evidence="1">THcHDO hydrolase</shortName>
        <ecNumber evidence="1">3.7.1.22</ecNumber>
    </recommendedName>
</protein>
<gene>
    <name evidence="1" type="primary">iolD</name>
    <name type="ordered locus">BAA_2571</name>
</gene>
<name>IOLD_BACAA</name>
<sequence length="644" mass="71013">MQTVRMTTAQALVKFLNQQYVEFDGKQQKFVKGIFTIFGHGNVVGLGQALEEDAGELEVYQGRNEQGMANAAMAFAKQKHRKQIMACTSSVGPGSANMITSAATASANNIPVLLLPGDVFATRQPDPVLQQIEQTHDLSISTNDAFRAVSKYWDRINRPEQLMTAMIQAMRVLTNPADTGAVTICLPQDVQGEAWDFPSYFFQKRVHRIERRLPTKASLADAVEMIKRKKKPVMICGGGVRYAEAAEELKQFAETFHIPFGETQAGKSAIESSHPYNLGGIGVTGNVAANTIAKEADLVIGIGTRFTDFTTASKQLFQNEEVEFLNINISEFHANKLDALKVIADAKEALLALIDELQEIDYQSSYTVEIADAKDAWETELSRLHNIRFTCQDFTPEVEGHFNENLNEYVDALGTQLTQTAVIGQINTLLDKDAIIVGAAGSLPGDLQRMWASRKPNTYHMEYGYSCMGYEVAGALGAKLAEPSKEVYAMVGDGSYQMLHSELVTSLQENKKINVLLFDNSGFGCINNLQMGNGMGSFGTEFRYRNQETRKLDGAIMKIDFAASAAGYGVKTYHVTSLEQLQEALIDAKKQTVSTLIDIKVLPKTMTNGYESWWHVGVAEVSKNQSVQAAYESKVSNLQQARSY</sequence>
<comment type="function">
    <text evidence="1">Involved in the cleavage of the C1-C2 bond of 3D-(3,5/4)-trihydroxycyclohexane-1,2-dione (THcHDO) to yield 5-deoxy-glucuronate (5DG).</text>
</comment>
<comment type="catalytic activity">
    <reaction evidence="1">
        <text>3D-3,5/4-trihydroxycyclohexane-1,2-dione + H2O = 5-deoxy-D-glucuronate + H(+)</text>
        <dbReference type="Rhea" id="RHEA:25836"/>
        <dbReference type="ChEBI" id="CHEBI:15377"/>
        <dbReference type="ChEBI" id="CHEBI:15378"/>
        <dbReference type="ChEBI" id="CHEBI:28446"/>
        <dbReference type="ChEBI" id="CHEBI:58852"/>
        <dbReference type="EC" id="3.7.1.22"/>
    </reaction>
</comment>
<comment type="cofactor">
    <cofactor evidence="1">
        <name>Mg(2+)</name>
        <dbReference type="ChEBI" id="CHEBI:18420"/>
    </cofactor>
    <text evidence="1">Binds 1 Mg(2+) ion per subunit.</text>
</comment>
<comment type="cofactor">
    <cofactor evidence="1">
        <name>thiamine diphosphate</name>
        <dbReference type="ChEBI" id="CHEBI:58937"/>
    </cofactor>
    <text evidence="1">Binds 1 thiamine pyrophosphate per subunit.</text>
</comment>
<comment type="pathway">
    <text evidence="1">Polyol metabolism; myo-inositol degradation into acetyl-CoA; acetyl-CoA from myo-inositol: step 3/7.</text>
</comment>
<comment type="similarity">
    <text evidence="1">Belongs to the TPP enzyme family.</text>
</comment>
<organism>
    <name type="scientific">Bacillus anthracis (strain A0248)</name>
    <dbReference type="NCBI Taxonomy" id="592021"/>
    <lineage>
        <taxon>Bacteria</taxon>
        <taxon>Bacillati</taxon>
        <taxon>Bacillota</taxon>
        <taxon>Bacilli</taxon>
        <taxon>Bacillales</taxon>
        <taxon>Bacillaceae</taxon>
        <taxon>Bacillus</taxon>
        <taxon>Bacillus cereus group</taxon>
    </lineage>
</organism>
<dbReference type="EC" id="3.7.1.22" evidence="1"/>
<dbReference type="EMBL" id="CP001598">
    <property type="protein sequence ID" value="ACQ48650.1"/>
    <property type="molecule type" value="Genomic_DNA"/>
</dbReference>
<dbReference type="RefSeq" id="WP_001195355.1">
    <property type="nucleotide sequence ID" value="NC_012659.1"/>
</dbReference>
<dbReference type="SMR" id="C3PAZ3"/>
<dbReference type="GeneID" id="45022377"/>
<dbReference type="KEGG" id="bai:BAA_2571"/>
<dbReference type="HOGENOM" id="CLU_013748_6_0_9"/>
<dbReference type="UniPathway" id="UPA00076">
    <property type="reaction ID" value="UER00145"/>
</dbReference>
<dbReference type="GO" id="GO:0005948">
    <property type="term" value="C:acetolactate synthase complex"/>
    <property type="evidence" value="ECO:0007669"/>
    <property type="project" value="TreeGrafter"/>
</dbReference>
<dbReference type="GO" id="GO:0102481">
    <property type="term" value="F:3D-(3,5/4)-trihydroxycyclohexane-1,2-dione hydrolase activity"/>
    <property type="evidence" value="ECO:0007669"/>
    <property type="project" value="UniProtKB-EC"/>
</dbReference>
<dbReference type="GO" id="GO:0003984">
    <property type="term" value="F:acetolactate synthase activity"/>
    <property type="evidence" value="ECO:0007669"/>
    <property type="project" value="TreeGrafter"/>
</dbReference>
<dbReference type="GO" id="GO:0050660">
    <property type="term" value="F:flavin adenine dinucleotide binding"/>
    <property type="evidence" value="ECO:0007669"/>
    <property type="project" value="TreeGrafter"/>
</dbReference>
<dbReference type="GO" id="GO:0000287">
    <property type="term" value="F:magnesium ion binding"/>
    <property type="evidence" value="ECO:0007669"/>
    <property type="project" value="UniProtKB-UniRule"/>
</dbReference>
<dbReference type="GO" id="GO:0030976">
    <property type="term" value="F:thiamine pyrophosphate binding"/>
    <property type="evidence" value="ECO:0007669"/>
    <property type="project" value="UniProtKB-UniRule"/>
</dbReference>
<dbReference type="GO" id="GO:0019310">
    <property type="term" value="P:inositol catabolic process"/>
    <property type="evidence" value="ECO:0007669"/>
    <property type="project" value="UniProtKB-UniRule"/>
</dbReference>
<dbReference type="GO" id="GO:0009097">
    <property type="term" value="P:isoleucine biosynthetic process"/>
    <property type="evidence" value="ECO:0007669"/>
    <property type="project" value="TreeGrafter"/>
</dbReference>
<dbReference type="GO" id="GO:0009099">
    <property type="term" value="P:L-valine biosynthetic process"/>
    <property type="evidence" value="ECO:0007669"/>
    <property type="project" value="TreeGrafter"/>
</dbReference>
<dbReference type="CDD" id="cd02003">
    <property type="entry name" value="TPP_IolD"/>
    <property type="match status" value="1"/>
</dbReference>
<dbReference type="CDD" id="cd07035">
    <property type="entry name" value="TPP_PYR_POX_like"/>
    <property type="match status" value="1"/>
</dbReference>
<dbReference type="FunFam" id="3.40.50.1220:FF:000040">
    <property type="entry name" value="3D-(3,5/4)-trihydroxycyclohexane-1,2-dione hydrolase"/>
    <property type="match status" value="1"/>
</dbReference>
<dbReference type="FunFam" id="3.40.50.970:FF:000056">
    <property type="entry name" value="3D-(3,5/4)-trihydroxycyclohexane-1,2-dione hydrolase"/>
    <property type="match status" value="1"/>
</dbReference>
<dbReference type="FunFam" id="3.40.50.970:FF:000072">
    <property type="entry name" value="3D-(3,5/4)-trihydroxycyclohexane-1,2-dione hydrolase"/>
    <property type="match status" value="1"/>
</dbReference>
<dbReference type="Gene3D" id="3.40.50.970">
    <property type="match status" value="2"/>
</dbReference>
<dbReference type="Gene3D" id="3.40.50.1220">
    <property type="entry name" value="TPP-binding domain"/>
    <property type="match status" value="1"/>
</dbReference>
<dbReference type="HAMAP" id="MF_01669">
    <property type="entry name" value="IolD"/>
    <property type="match status" value="1"/>
</dbReference>
<dbReference type="InterPro" id="IPR029035">
    <property type="entry name" value="DHS-like_NAD/FAD-binding_dom"/>
</dbReference>
<dbReference type="InterPro" id="IPR030817">
    <property type="entry name" value="Myo_inos_IolD"/>
</dbReference>
<dbReference type="InterPro" id="IPR023757">
    <property type="entry name" value="THcHDO_hydrolase_firmi"/>
</dbReference>
<dbReference type="InterPro" id="IPR029061">
    <property type="entry name" value="THDP-binding"/>
</dbReference>
<dbReference type="InterPro" id="IPR012000">
    <property type="entry name" value="Thiamin_PyroP_enz_cen_dom"/>
</dbReference>
<dbReference type="InterPro" id="IPR012001">
    <property type="entry name" value="Thiamin_PyroP_enz_TPP-bd_dom"/>
</dbReference>
<dbReference type="InterPro" id="IPR000399">
    <property type="entry name" value="TPP-bd_CS"/>
</dbReference>
<dbReference type="InterPro" id="IPR045229">
    <property type="entry name" value="TPP_enz"/>
</dbReference>
<dbReference type="InterPro" id="IPR011766">
    <property type="entry name" value="TPP_enzyme_TPP-bd"/>
</dbReference>
<dbReference type="NCBIfam" id="TIGR04377">
    <property type="entry name" value="myo_inos_iolD"/>
    <property type="match status" value="1"/>
</dbReference>
<dbReference type="PANTHER" id="PTHR18968:SF9">
    <property type="entry name" value="3D-(3,5_4)-TRIHYDROXYCYCLOHEXANE-1,2-DIONE HYDROLASE"/>
    <property type="match status" value="1"/>
</dbReference>
<dbReference type="PANTHER" id="PTHR18968">
    <property type="entry name" value="THIAMINE PYROPHOSPHATE ENZYMES"/>
    <property type="match status" value="1"/>
</dbReference>
<dbReference type="Pfam" id="PF02775">
    <property type="entry name" value="TPP_enzyme_C"/>
    <property type="match status" value="1"/>
</dbReference>
<dbReference type="Pfam" id="PF00205">
    <property type="entry name" value="TPP_enzyme_M"/>
    <property type="match status" value="1"/>
</dbReference>
<dbReference type="Pfam" id="PF02776">
    <property type="entry name" value="TPP_enzyme_N"/>
    <property type="match status" value="1"/>
</dbReference>
<dbReference type="SUPFAM" id="SSF52467">
    <property type="entry name" value="DHS-like NAD/FAD-binding domain"/>
    <property type="match status" value="1"/>
</dbReference>
<dbReference type="SUPFAM" id="SSF52518">
    <property type="entry name" value="Thiamin diphosphate-binding fold (THDP-binding)"/>
    <property type="match status" value="2"/>
</dbReference>
<dbReference type="PROSITE" id="PS00187">
    <property type="entry name" value="TPP_ENZYMES"/>
    <property type="match status" value="1"/>
</dbReference>